<gene>
    <name evidence="1" type="primary">iolA</name>
    <name type="ordered locus">BCB4264_A2320</name>
</gene>
<reference key="1">
    <citation type="submission" date="2008-10" db="EMBL/GenBank/DDBJ databases">
        <title>Genome sequence of Bacillus cereus B4264.</title>
        <authorList>
            <person name="Dodson R.J."/>
            <person name="Durkin A.S."/>
            <person name="Rosovitz M.J."/>
            <person name="Rasko D.A."/>
            <person name="Hoffmaster A."/>
            <person name="Ravel J."/>
            <person name="Sutton G."/>
        </authorList>
    </citation>
    <scope>NUCLEOTIDE SEQUENCE [LARGE SCALE GENOMIC DNA]</scope>
    <source>
        <strain>B4264</strain>
    </source>
</reference>
<accession>B7H597</accession>
<feature type="chain" id="PRO_1000187312" description="Malonate-semialdehyde dehydrogenase">
    <location>
        <begin position="1"/>
        <end position="486"/>
    </location>
</feature>
<feature type="active site" description="Nucleophile" evidence="1">
    <location>
        <position position="286"/>
    </location>
</feature>
<feature type="binding site" evidence="1">
    <location>
        <position position="154"/>
    </location>
    <ligand>
        <name>NAD(+)</name>
        <dbReference type="ChEBI" id="CHEBI:57540"/>
    </ligand>
</feature>
<feature type="binding site" evidence="1">
    <location>
        <position position="178"/>
    </location>
    <ligand>
        <name>NAD(+)</name>
        <dbReference type="ChEBI" id="CHEBI:57540"/>
    </ligand>
</feature>
<feature type="binding site" evidence="1">
    <location>
        <position position="181"/>
    </location>
    <ligand>
        <name>NAD(+)</name>
        <dbReference type="ChEBI" id="CHEBI:57540"/>
    </ligand>
</feature>
<feature type="binding site" evidence="1">
    <location>
        <position position="182"/>
    </location>
    <ligand>
        <name>NAD(+)</name>
        <dbReference type="ChEBI" id="CHEBI:57540"/>
    </ligand>
</feature>
<feature type="binding site" evidence="1">
    <location>
        <position position="231"/>
    </location>
    <ligand>
        <name>NAD(+)</name>
        <dbReference type="ChEBI" id="CHEBI:57540"/>
    </ligand>
</feature>
<feature type="binding site" evidence="1">
    <location>
        <position position="386"/>
    </location>
    <ligand>
        <name>NAD(+)</name>
        <dbReference type="ChEBI" id="CHEBI:57540"/>
    </ligand>
</feature>
<evidence type="ECO:0000255" key="1">
    <source>
        <dbReference type="HAMAP-Rule" id="MF_01670"/>
    </source>
</evidence>
<sequence>MITTEIKRVKNHINGEWVESTGTEVEAVPNPATGKIIAYVPLSPKEDVEKAVEAAKAAFETWSKVPVPNRSRNLYKYLQLLQENKDELAKIITLENGKTLTDATGEVQRGIEAVELATSTPNLMMGQALPNIASGIDGSIWRYPIGVVAGITPFNFPMMIPLWMFPLAIACGNTFVLKTSERTPLLAERLVELFYEAGFPKGVLNLVQGGKDVVNSILENKDIQAVSFVGSEPVARYVYETGTKHGKRVQALAGAKNHAIVMPDCNLEKTVQGVIGSAFASSGERCMACSVVAVVDEIADEFIDVLVAETKKLKVGDGFNEDNYVGPLIRESHKERVLGYINSGVADGATLLVDGRKINEEVGEGYFVGATIFDGVNQEMKIWQDEIFAPVLSIVRVKDLEEGIKLTNQSKFANGAVIYTSNGKHAQTFRDNIDAGMIGVNVNVPAPMAFFAFAGNKASFFGDLGTNGTDGVQFYTRKKVVTERWF</sequence>
<comment type="function">
    <text evidence="1">Catalyzes the oxidation of malonate semialdehyde (MSA) and methylmalonate semialdehyde (MMSA) into acetyl-CoA and propanoyl-CoA, respectively. Is involved in a myo-inositol catabolic pathway. Bicarbonate, and not CO2, is the end-product of the enzymatic reaction.</text>
</comment>
<comment type="catalytic activity">
    <reaction evidence="1">
        <text>3-oxopropanoate + NAD(+) + CoA + H2O = hydrogencarbonate + acetyl-CoA + NADH + H(+)</text>
        <dbReference type="Rhea" id="RHEA:76615"/>
        <dbReference type="ChEBI" id="CHEBI:15377"/>
        <dbReference type="ChEBI" id="CHEBI:15378"/>
        <dbReference type="ChEBI" id="CHEBI:17544"/>
        <dbReference type="ChEBI" id="CHEBI:33190"/>
        <dbReference type="ChEBI" id="CHEBI:57287"/>
        <dbReference type="ChEBI" id="CHEBI:57288"/>
        <dbReference type="ChEBI" id="CHEBI:57540"/>
        <dbReference type="ChEBI" id="CHEBI:57945"/>
        <dbReference type="EC" id="1.2.1.27"/>
    </reaction>
    <physiologicalReaction direction="left-to-right" evidence="1">
        <dbReference type="Rhea" id="RHEA:76616"/>
    </physiologicalReaction>
</comment>
<comment type="catalytic activity">
    <reaction evidence="1">
        <text>2-methyl-3-oxopropanoate + NAD(+) + CoA + H2O = propanoyl-CoA + hydrogencarbonate + NADH + H(+)</text>
        <dbReference type="Rhea" id="RHEA:20804"/>
        <dbReference type="ChEBI" id="CHEBI:15377"/>
        <dbReference type="ChEBI" id="CHEBI:15378"/>
        <dbReference type="ChEBI" id="CHEBI:17544"/>
        <dbReference type="ChEBI" id="CHEBI:57287"/>
        <dbReference type="ChEBI" id="CHEBI:57392"/>
        <dbReference type="ChEBI" id="CHEBI:57540"/>
        <dbReference type="ChEBI" id="CHEBI:57700"/>
        <dbReference type="ChEBI" id="CHEBI:57945"/>
        <dbReference type="EC" id="1.2.1.27"/>
    </reaction>
    <physiologicalReaction direction="left-to-right" evidence="1">
        <dbReference type="Rhea" id="RHEA:20805"/>
    </physiologicalReaction>
</comment>
<comment type="pathway">
    <text evidence="1">Polyol metabolism; myo-inositol degradation into acetyl-CoA; acetyl-CoA from myo-inositol: step 7/7.</text>
</comment>
<comment type="subunit">
    <text evidence="1">Homotetramer.</text>
</comment>
<comment type="similarity">
    <text evidence="1">Belongs to the aldehyde dehydrogenase family. IolA subfamily.</text>
</comment>
<name>IOLA_BACC4</name>
<protein>
    <recommendedName>
        <fullName evidence="1">Malonate-semialdehyde dehydrogenase</fullName>
        <shortName evidence="1">MSA dehydrogenase</shortName>
        <ecNumber evidence="1">1.2.1.27</ecNumber>
    </recommendedName>
    <alternativeName>
        <fullName evidence="1">Methylmalonate-semialdehyde dehydrogenase</fullName>
        <shortName evidence="1">MMSA dehydrogenase</shortName>
        <shortName evidence="1">MSDH</shortName>
    </alternativeName>
</protein>
<keyword id="KW-0520">NAD</keyword>
<keyword id="KW-0560">Oxidoreductase</keyword>
<proteinExistence type="inferred from homology"/>
<dbReference type="EC" id="1.2.1.27" evidence="1"/>
<dbReference type="EMBL" id="CP001176">
    <property type="protein sequence ID" value="ACK61889.1"/>
    <property type="molecule type" value="Genomic_DNA"/>
</dbReference>
<dbReference type="RefSeq" id="WP_000633344.1">
    <property type="nucleotide sequence ID" value="NZ_VEHB01000001.1"/>
</dbReference>
<dbReference type="SMR" id="B7H597"/>
<dbReference type="KEGG" id="bcb:BCB4264_A2320"/>
<dbReference type="HOGENOM" id="CLU_005391_1_10_9"/>
<dbReference type="UniPathway" id="UPA00076">
    <property type="reaction ID" value="UER00148"/>
</dbReference>
<dbReference type="Proteomes" id="UP000007096">
    <property type="component" value="Chromosome"/>
</dbReference>
<dbReference type="GO" id="GO:0018478">
    <property type="term" value="F:malonate-semialdehyde dehydrogenase (acetylating) activity"/>
    <property type="evidence" value="ECO:0007669"/>
    <property type="project" value="UniProtKB-UniRule"/>
</dbReference>
<dbReference type="GO" id="GO:0004491">
    <property type="term" value="F:methylmalonate-semialdehyde dehydrogenase (acylating, NAD) activity"/>
    <property type="evidence" value="ECO:0007669"/>
    <property type="project" value="UniProtKB-UniRule"/>
</dbReference>
<dbReference type="GO" id="GO:0019310">
    <property type="term" value="P:inositol catabolic process"/>
    <property type="evidence" value="ECO:0007669"/>
    <property type="project" value="UniProtKB-UniRule"/>
</dbReference>
<dbReference type="GO" id="GO:0006210">
    <property type="term" value="P:thymine catabolic process"/>
    <property type="evidence" value="ECO:0007669"/>
    <property type="project" value="TreeGrafter"/>
</dbReference>
<dbReference type="GO" id="GO:0006574">
    <property type="term" value="P:valine catabolic process"/>
    <property type="evidence" value="ECO:0007669"/>
    <property type="project" value="TreeGrafter"/>
</dbReference>
<dbReference type="CDD" id="cd07085">
    <property type="entry name" value="ALDH_F6_MMSDH"/>
    <property type="match status" value="1"/>
</dbReference>
<dbReference type="FunFam" id="3.40.309.10:FF:000002">
    <property type="entry name" value="Methylmalonate-semialdehyde dehydrogenase (Acylating)"/>
    <property type="match status" value="1"/>
</dbReference>
<dbReference type="FunFam" id="3.40.605.10:FF:000003">
    <property type="entry name" value="Methylmalonate-semialdehyde dehydrogenase [acylating]"/>
    <property type="match status" value="1"/>
</dbReference>
<dbReference type="Gene3D" id="3.40.605.10">
    <property type="entry name" value="Aldehyde Dehydrogenase, Chain A, domain 1"/>
    <property type="match status" value="1"/>
</dbReference>
<dbReference type="Gene3D" id="3.40.309.10">
    <property type="entry name" value="Aldehyde Dehydrogenase, Chain A, domain 2"/>
    <property type="match status" value="1"/>
</dbReference>
<dbReference type="HAMAP" id="MF_01670">
    <property type="entry name" value="IolA"/>
    <property type="match status" value="1"/>
</dbReference>
<dbReference type="InterPro" id="IPR016161">
    <property type="entry name" value="Ald_DH/histidinol_DH"/>
</dbReference>
<dbReference type="InterPro" id="IPR016163">
    <property type="entry name" value="Ald_DH_C"/>
</dbReference>
<dbReference type="InterPro" id="IPR016160">
    <property type="entry name" value="Ald_DH_CS_CYS"/>
</dbReference>
<dbReference type="InterPro" id="IPR016162">
    <property type="entry name" value="Ald_DH_N"/>
</dbReference>
<dbReference type="InterPro" id="IPR015590">
    <property type="entry name" value="Aldehyde_DH_dom"/>
</dbReference>
<dbReference type="InterPro" id="IPR010061">
    <property type="entry name" value="MeMal-semiAld_DH"/>
</dbReference>
<dbReference type="InterPro" id="IPR023510">
    <property type="entry name" value="MSDH_GmP_bac"/>
</dbReference>
<dbReference type="NCBIfam" id="TIGR01722">
    <property type="entry name" value="MMSDH"/>
    <property type="match status" value="1"/>
</dbReference>
<dbReference type="PANTHER" id="PTHR43866">
    <property type="entry name" value="MALONATE-SEMIALDEHYDE DEHYDROGENASE"/>
    <property type="match status" value="1"/>
</dbReference>
<dbReference type="PANTHER" id="PTHR43866:SF4">
    <property type="entry name" value="MALONATE-SEMIALDEHYDE DEHYDROGENASE"/>
    <property type="match status" value="1"/>
</dbReference>
<dbReference type="Pfam" id="PF00171">
    <property type="entry name" value="Aldedh"/>
    <property type="match status" value="1"/>
</dbReference>
<dbReference type="SUPFAM" id="SSF53720">
    <property type="entry name" value="ALDH-like"/>
    <property type="match status" value="1"/>
</dbReference>
<dbReference type="PROSITE" id="PS00070">
    <property type="entry name" value="ALDEHYDE_DEHYDR_CYS"/>
    <property type="match status" value="1"/>
</dbReference>
<organism>
    <name type="scientific">Bacillus cereus (strain B4264)</name>
    <dbReference type="NCBI Taxonomy" id="405532"/>
    <lineage>
        <taxon>Bacteria</taxon>
        <taxon>Bacillati</taxon>
        <taxon>Bacillota</taxon>
        <taxon>Bacilli</taxon>
        <taxon>Bacillales</taxon>
        <taxon>Bacillaceae</taxon>
        <taxon>Bacillus</taxon>
        <taxon>Bacillus cereus group</taxon>
    </lineage>
</organism>